<organism>
    <name type="scientific">Talaromyces marneffei</name>
    <name type="common">Penicillium marneffei</name>
    <dbReference type="NCBI Taxonomy" id="37727"/>
    <lineage>
        <taxon>Eukaryota</taxon>
        <taxon>Fungi</taxon>
        <taxon>Dikarya</taxon>
        <taxon>Ascomycota</taxon>
        <taxon>Pezizomycotina</taxon>
        <taxon>Eurotiomycetes</taxon>
        <taxon>Eurotiomycetidae</taxon>
        <taxon>Eurotiales</taxon>
        <taxon>Trichocomaceae</taxon>
        <taxon>Talaromyces</taxon>
        <taxon>Talaromyces sect. Talaromyces</taxon>
    </lineage>
</organism>
<comment type="function">
    <text evidence="1">Catalyzes the reversible transfer of the terminal phosphate group between ATP and AMP. Plays an important role in cellular energy homeostasis and in adenine nucleotide metabolism. Adenylate kinase activity is critical for regulation of the phosphate utilization and the AMP de novo biosynthesis pathways.</text>
</comment>
<comment type="catalytic activity">
    <reaction evidence="1">
        <text>AMP + ATP = 2 ADP</text>
        <dbReference type="Rhea" id="RHEA:12973"/>
        <dbReference type="ChEBI" id="CHEBI:30616"/>
        <dbReference type="ChEBI" id="CHEBI:456215"/>
        <dbReference type="ChEBI" id="CHEBI:456216"/>
        <dbReference type="EC" id="2.7.4.3"/>
    </reaction>
</comment>
<comment type="subunit">
    <text evidence="1">Monomer.</text>
</comment>
<comment type="subcellular location">
    <subcellularLocation>
        <location evidence="1">Cytoplasm</location>
        <location evidence="1">Cytosol</location>
    </subcellularLocation>
    <subcellularLocation>
        <location evidence="1">Mitochondrion intermembrane space</location>
    </subcellularLocation>
    <text evidence="1">Predominantly mitochondrial.</text>
</comment>
<comment type="induction">
    <text evidence="2">Preferentially expressed in the developing yeast phase of P.marneffei.</text>
</comment>
<comment type="domain">
    <text evidence="1">Consists of three domains, a large central CORE domain and two small peripheral domains, NMPbind and LID, which undergo movements during catalysis. The LID domain closes over the site of phosphoryl transfer upon ATP binding. Assembling and dissambling the active center during each catalytic cycle provides an effective means to prevent ATP hydrolysis.</text>
</comment>
<comment type="similarity">
    <text evidence="1">Belongs to the adenylate kinase family. AK2 subfamily.</text>
</comment>
<feature type="chain" id="PRO_0000365681" description="Adenylate kinase">
    <location>
        <begin position="1"/>
        <end position="272"/>
    </location>
</feature>
<feature type="region of interest" description="NMP" evidence="1">
    <location>
        <begin position="75"/>
        <end position="104"/>
    </location>
</feature>
<feature type="region of interest" description="LID" evidence="1">
    <location>
        <begin position="172"/>
        <end position="209"/>
    </location>
</feature>
<feature type="binding site" evidence="1">
    <location>
        <begin position="55"/>
        <end position="60"/>
    </location>
    <ligand>
        <name>ATP</name>
        <dbReference type="ChEBI" id="CHEBI:30616"/>
    </ligand>
</feature>
<feature type="binding site" evidence="1">
    <location>
        <position position="76"/>
    </location>
    <ligand>
        <name>AMP</name>
        <dbReference type="ChEBI" id="CHEBI:456215"/>
    </ligand>
</feature>
<feature type="binding site" evidence="1">
    <location>
        <position position="81"/>
    </location>
    <ligand>
        <name>AMP</name>
        <dbReference type="ChEBI" id="CHEBI:456215"/>
    </ligand>
</feature>
<feature type="binding site" evidence="1">
    <location>
        <begin position="102"/>
        <end position="104"/>
    </location>
    <ligand>
        <name>AMP</name>
        <dbReference type="ChEBI" id="CHEBI:456215"/>
    </ligand>
</feature>
<feature type="binding site" evidence="1">
    <location>
        <begin position="131"/>
        <end position="134"/>
    </location>
    <ligand>
        <name>AMP</name>
        <dbReference type="ChEBI" id="CHEBI:456215"/>
    </ligand>
</feature>
<feature type="binding site" evidence="1">
    <location>
        <position position="138"/>
    </location>
    <ligand>
        <name>AMP</name>
        <dbReference type="ChEBI" id="CHEBI:456215"/>
    </ligand>
</feature>
<feature type="binding site" evidence="1">
    <location>
        <position position="173"/>
    </location>
    <ligand>
        <name>ATP</name>
        <dbReference type="ChEBI" id="CHEBI:30616"/>
    </ligand>
</feature>
<feature type="binding site" evidence="1">
    <location>
        <begin position="182"/>
        <end position="183"/>
    </location>
    <ligand>
        <name>ATP</name>
        <dbReference type="ChEBI" id="CHEBI:30616"/>
    </ligand>
</feature>
<feature type="binding site" evidence="1">
    <location>
        <position position="206"/>
    </location>
    <ligand>
        <name>AMP</name>
        <dbReference type="ChEBI" id="CHEBI:456215"/>
    </ligand>
</feature>
<feature type="binding site" evidence="1">
    <location>
        <position position="217"/>
    </location>
    <ligand>
        <name>AMP</name>
        <dbReference type="ChEBI" id="CHEBI:456215"/>
    </ligand>
</feature>
<feature type="binding site" evidence="1">
    <location>
        <position position="245"/>
    </location>
    <ligand>
        <name>ATP</name>
        <dbReference type="ChEBI" id="CHEBI:30616"/>
    </ligand>
</feature>
<evidence type="ECO:0000255" key="1">
    <source>
        <dbReference type="HAMAP-Rule" id="MF_03168"/>
    </source>
</evidence>
<evidence type="ECO:0000269" key="2">
    <source>
    </source>
</evidence>
<dbReference type="EC" id="2.7.4.3" evidence="1"/>
<dbReference type="EMBL" id="EU532187">
    <property type="protein sequence ID" value="ACB30375.1"/>
    <property type="molecule type" value="Genomic_DNA"/>
</dbReference>
<dbReference type="SMR" id="B2CNY4"/>
<dbReference type="VEuPathDB" id="FungiDB:PMAA_096050"/>
<dbReference type="OrthoDB" id="439792at2759"/>
<dbReference type="GO" id="GO:0005829">
    <property type="term" value="C:cytosol"/>
    <property type="evidence" value="ECO:0007669"/>
    <property type="project" value="UniProtKB-SubCell"/>
</dbReference>
<dbReference type="GO" id="GO:0005758">
    <property type="term" value="C:mitochondrial intermembrane space"/>
    <property type="evidence" value="ECO:0007669"/>
    <property type="project" value="UniProtKB-SubCell"/>
</dbReference>
<dbReference type="GO" id="GO:0004017">
    <property type="term" value="F:adenylate kinase activity"/>
    <property type="evidence" value="ECO:0007669"/>
    <property type="project" value="UniProtKB-UniRule"/>
</dbReference>
<dbReference type="GO" id="GO:0005524">
    <property type="term" value="F:ATP binding"/>
    <property type="evidence" value="ECO:0007669"/>
    <property type="project" value="UniProtKB-KW"/>
</dbReference>
<dbReference type="GO" id="GO:0006172">
    <property type="term" value="P:ADP biosynthetic process"/>
    <property type="evidence" value="ECO:0007669"/>
    <property type="project" value="UniProtKB-UniRule"/>
</dbReference>
<dbReference type="GO" id="GO:0046033">
    <property type="term" value="P:AMP metabolic process"/>
    <property type="evidence" value="ECO:0007669"/>
    <property type="project" value="UniProtKB-UniRule"/>
</dbReference>
<dbReference type="GO" id="GO:0046034">
    <property type="term" value="P:ATP metabolic process"/>
    <property type="evidence" value="ECO:0007669"/>
    <property type="project" value="UniProtKB-UniRule"/>
</dbReference>
<dbReference type="CDD" id="cd01428">
    <property type="entry name" value="ADK"/>
    <property type="match status" value="1"/>
</dbReference>
<dbReference type="FunFam" id="3.40.50.300:FF:000106">
    <property type="entry name" value="Adenylate kinase mitochondrial"/>
    <property type="match status" value="1"/>
</dbReference>
<dbReference type="Gene3D" id="3.40.50.300">
    <property type="entry name" value="P-loop containing nucleotide triphosphate hydrolases"/>
    <property type="match status" value="1"/>
</dbReference>
<dbReference type="HAMAP" id="MF_00235">
    <property type="entry name" value="Adenylate_kinase_Adk"/>
    <property type="match status" value="1"/>
</dbReference>
<dbReference type="HAMAP" id="MF_03168">
    <property type="entry name" value="Adenylate_kinase_AK2"/>
    <property type="match status" value="1"/>
</dbReference>
<dbReference type="InterPro" id="IPR006259">
    <property type="entry name" value="Adenyl_kin_sub"/>
</dbReference>
<dbReference type="InterPro" id="IPR000850">
    <property type="entry name" value="Adenylat/UMP-CMP_kin"/>
</dbReference>
<dbReference type="InterPro" id="IPR033690">
    <property type="entry name" value="Adenylat_kinase_CS"/>
</dbReference>
<dbReference type="InterPro" id="IPR007862">
    <property type="entry name" value="Adenylate_kinase_lid-dom"/>
</dbReference>
<dbReference type="InterPro" id="IPR028587">
    <property type="entry name" value="AK2"/>
</dbReference>
<dbReference type="InterPro" id="IPR027417">
    <property type="entry name" value="P-loop_NTPase"/>
</dbReference>
<dbReference type="NCBIfam" id="TIGR01351">
    <property type="entry name" value="adk"/>
    <property type="match status" value="1"/>
</dbReference>
<dbReference type="NCBIfam" id="NF001380">
    <property type="entry name" value="PRK00279.1-2"/>
    <property type="match status" value="1"/>
</dbReference>
<dbReference type="NCBIfam" id="NF001381">
    <property type="entry name" value="PRK00279.1-3"/>
    <property type="match status" value="1"/>
</dbReference>
<dbReference type="NCBIfam" id="NF011100">
    <property type="entry name" value="PRK14527.1"/>
    <property type="match status" value="1"/>
</dbReference>
<dbReference type="PANTHER" id="PTHR23359">
    <property type="entry name" value="NUCLEOTIDE KINASE"/>
    <property type="match status" value="1"/>
</dbReference>
<dbReference type="Pfam" id="PF00406">
    <property type="entry name" value="ADK"/>
    <property type="match status" value="1"/>
</dbReference>
<dbReference type="Pfam" id="PF05191">
    <property type="entry name" value="ADK_lid"/>
    <property type="match status" value="1"/>
</dbReference>
<dbReference type="PRINTS" id="PR00094">
    <property type="entry name" value="ADENYLTKNASE"/>
</dbReference>
<dbReference type="SUPFAM" id="SSF52540">
    <property type="entry name" value="P-loop containing nucleoside triphosphate hydrolases"/>
    <property type="match status" value="1"/>
</dbReference>
<dbReference type="PROSITE" id="PS00113">
    <property type="entry name" value="ADENYLATE_KINASE"/>
    <property type="match status" value="1"/>
</dbReference>
<reference key="1">
    <citation type="submission" date="2008-03" db="EMBL/GenBank/DDBJ databases">
        <title>Penicillium marneffei adenylate kinase.</title>
        <authorList>
            <person name="Chandler J.M."/>
            <person name="Walker G.R."/>
            <person name="Cooper C.R. Jr."/>
        </authorList>
    </citation>
    <scope>NUCLEOTIDE SEQUENCE [GENOMIC DNA]</scope>
    <source>
        <strain>F4 / CBS 119456</strain>
    </source>
</reference>
<reference key="2">
    <citation type="journal article" date="2008" name="Proteome Sci.">
        <title>Protein profiling of the dimorphic, pathogenic fungus, Penicillium marneffei.</title>
        <authorList>
            <person name="Chandler J.M."/>
            <person name="Treece E.R."/>
            <person name="Trenary H.R."/>
            <person name="Brenneman J.L."/>
            <person name="Flickner T.J."/>
            <person name="Frommelt J.L."/>
            <person name="Oo Z.M."/>
            <person name="Patterson M.M."/>
            <person name="Rundle W.T."/>
            <person name="Valle O.V."/>
            <person name="Kim T.D."/>
            <person name="Walker G.R."/>
            <person name="Cooper C.R. Jr."/>
        </authorList>
    </citation>
    <scope>IDENTIFICATION BY MASS SPECTROMETRY</scope>
    <scope>INDUCTION</scope>
    <source>
        <strain>F4 / CBS 119456</strain>
    </source>
</reference>
<accession>B2CNY4</accession>
<proteinExistence type="evidence at protein level"/>
<keyword id="KW-0067">ATP-binding</keyword>
<keyword id="KW-0963">Cytoplasm</keyword>
<keyword id="KW-0418">Kinase</keyword>
<keyword id="KW-0496">Mitochondrion</keyword>
<keyword id="KW-0547">Nucleotide-binding</keyword>
<keyword id="KW-0808">Transferase</keyword>
<gene>
    <name type="primary">adk1</name>
</gene>
<sequence length="272" mass="29843">MAPITQETVDGLKDIIHKLESRVADLESRLVHGSPASNSKSLAEQFRIILIGPPGAGKGTQAPRLKEKYCVCHLATGDMLRSQVAKKTPLGKEAKKIMDQGGLVSDEIMVNMIKSELETNSECKNGFILDGFPRTVAQAERLDDMLSARNEKLQHAVELQIDDALLVARITGRLVHPASGRSYHKIFNPPKQDMKDDITGEPLIQRSDDNAATLEKRLATYHAQTSPVVDYYKKTGIWCGIDASQEPGQVWKSLLGVFQPSSSILSKVGLSK</sequence>
<name>KAD2_TALMA</name>
<protein>
    <recommendedName>
        <fullName evidence="1">Adenylate kinase</fullName>
        <ecNumber evidence="1">2.7.4.3</ecNumber>
    </recommendedName>
    <alternativeName>
        <fullName evidence="1">ATP-AMP transphosphorylase</fullName>
    </alternativeName>
    <alternativeName>
        <fullName evidence="1">ATP:AMP phosphotransferase</fullName>
    </alternativeName>
    <alternativeName>
        <fullName evidence="1">Adenylate kinase cytosolic and mitochondrial</fullName>
    </alternativeName>
    <alternativeName>
        <fullName evidence="1">Adenylate monophosphate kinase</fullName>
    </alternativeName>
</protein>